<name>HCY5_MAJSQ</name>
<evidence type="ECO:0000305" key="1"/>
<protein>
    <recommendedName>
        <fullName>Hemocyanin subunit 5</fullName>
    </recommendedName>
</protein>
<dbReference type="GO" id="GO:0005576">
    <property type="term" value="C:extracellular region"/>
    <property type="evidence" value="ECO:0007669"/>
    <property type="project" value="UniProtKB-SubCell"/>
</dbReference>
<dbReference type="GO" id="GO:0005344">
    <property type="term" value="F:oxygen carrier activity"/>
    <property type="evidence" value="ECO:0007669"/>
    <property type="project" value="UniProtKB-KW"/>
</dbReference>
<organism evidence="1">
    <name type="scientific">Maja squinado</name>
    <name type="common">Mediterranean spider crab</name>
    <name type="synonym">Cancer squinado</name>
    <dbReference type="NCBI Taxonomy" id="99391"/>
    <lineage>
        <taxon>Eukaryota</taxon>
        <taxon>Metazoa</taxon>
        <taxon>Ecdysozoa</taxon>
        <taxon>Arthropoda</taxon>
        <taxon>Crustacea</taxon>
        <taxon>Multicrustacea</taxon>
        <taxon>Malacostraca</taxon>
        <taxon>Eumalacostraca</taxon>
        <taxon>Eucarida</taxon>
        <taxon>Decapoda</taxon>
        <taxon>Pleocyemata</taxon>
        <taxon>Brachyura</taxon>
        <taxon>Eubrachyura</taxon>
        <taxon>Majoidea</taxon>
        <taxon>Majidae</taxon>
        <taxon>Maja</taxon>
    </lineage>
</organism>
<keyword id="KW-0186">Copper</keyword>
<keyword id="KW-0903">Direct protein sequencing</keyword>
<keyword id="KW-0561">Oxygen transport</keyword>
<keyword id="KW-0964">Secreted</keyword>
<keyword id="KW-0813">Transport</keyword>
<reference evidence="1" key="1">
    <citation type="journal article" date="1999" name="Comp. Biochem. Physiol.">
        <title>Subunit composition and N-terminal analysis of arthropod hemocyanins.</title>
        <authorList>
            <person name="Stoeva S."/>
            <person name="Dolashka P."/>
            <person name="Hristova R."/>
            <person name="Genov N."/>
            <person name="Voelter W."/>
        </authorList>
    </citation>
    <scope>PROTEIN SEQUENCE</scope>
</reference>
<comment type="function">
    <text>Hemocyanins are copper-containing oxygen carriers occurring freely dissolved in the hemolymph of many mollusks and arthropods.</text>
</comment>
<comment type="subcellular location">
    <subcellularLocation>
        <location>Secreted</location>
        <location>Extracellular space</location>
    </subcellularLocation>
</comment>
<comment type="tissue specificity">
    <text>Hemolymph.</text>
</comment>
<comment type="similarity">
    <text evidence="1">Belongs to the tyrosinase family. Hemocyanin subfamily.</text>
</comment>
<proteinExistence type="evidence at protein level"/>
<accession>P82307</accession>
<sequence>DHAGTVSKAHKQHDVNSVLYKVYEDI</sequence>
<feature type="chain" id="PRO_0000204287" description="Hemocyanin subunit 5">
    <location>
        <begin position="1"/>
        <end position="26" status="greater than"/>
    </location>
</feature>
<feature type="non-terminal residue" evidence="1">
    <location>
        <position position="26"/>
    </location>
</feature>